<gene>
    <name evidence="1" type="primary">hisS</name>
    <name type="ordered locus">EcSMS35_2666</name>
</gene>
<proteinExistence type="inferred from homology"/>
<comment type="catalytic activity">
    <reaction evidence="1">
        <text>tRNA(His) + L-histidine + ATP = L-histidyl-tRNA(His) + AMP + diphosphate + H(+)</text>
        <dbReference type="Rhea" id="RHEA:17313"/>
        <dbReference type="Rhea" id="RHEA-COMP:9665"/>
        <dbReference type="Rhea" id="RHEA-COMP:9689"/>
        <dbReference type="ChEBI" id="CHEBI:15378"/>
        <dbReference type="ChEBI" id="CHEBI:30616"/>
        <dbReference type="ChEBI" id="CHEBI:33019"/>
        <dbReference type="ChEBI" id="CHEBI:57595"/>
        <dbReference type="ChEBI" id="CHEBI:78442"/>
        <dbReference type="ChEBI" id="CHEBI:78527"/>
        <dbReference type="ChEBI" id="CHEBI:456215"/>
        <dbReference type="EC" id="6.1.1.21"/>
    </reaction>
</comment>
<comment type="subunit">
    <text evidence="1">Homodimer.</text>
</comment>
<comment type="subcellular location">
    <subcellularLocation>
        <location evidence="1">Cytoplasm</location>
    </subcellularLocation>
</comment>
<comment type="similarity">
    <text evidence="1">Belongs to the class-II aminoacyl-tRNA synthetase family.</text>
</comment>
<feature type="chain" id="PRO_1000199130" description="Histidine--tRNA ligase">
    <location>
        <begin position="1"/>
        <end position="424"/>
    </location>
</feature>
<accession>B1LNG9</accession>
<dbReference type="EC" id="6.1.1.21" evidence="1"/>
<dbReference type="EMBL" id="CP000970">
    <property type="protein sequence ID" value="ACB17999.1"/>
    <property type="molecule type" value="Genomic_DNA"/>
</dbReference>
<dbReference type="RefSeq" id="WP_001107167.1">
    <property type="nucleotide sequence ID" value="NC_010498.1"/>
</dbReference>
<dbReference type="SMR" id="B1LNG9"/>
<dbReference type="GeneID" id="75206207"/>
<dbReference type="KEGG" id="ecm:EcSMS35_2666"/>
<dbReference type="HOGENOM" id="CLU_025113_1_1_6"/>
<dbReference type="Proteomes" id="UP000007011">
    <property type="component" value="Chromosome"/>
</dbReference>
<dbReference type="GO" id="GO:0005737">
    <property type="term" value="C:cytoplasm"/>
    <property type="evidence" value="ECO:0007669"/>
    <property type="project" value="UniProtKB-SubCell"/>
</dbReference>
<dbReference type="GO" id="GO:0005524">
    <property type="term" value="F:ATP binding"/>
    <property type="evidence" value="ECO:0007669"/>
    <property type="project" value="UniProtKB-UniRule"/>
</dbReference>
<dbReference type="GO" id="GO:0004821">
    <property type="term" value="F:histidine-tRNA ligase activity"/>
    <property type="evidence" value="ECO:0007669"/>
    <property type="project" value="UniProtKB-UniRule"/>
</dbReference>
<dbReference type="GO" id="GO:0006427">
    <property type="term" value="P:histidyl-tRNA aminoacylation"/>
    <property type="evidence" value="ECO:0007669"/>
    <property type="project" value="UniProtKB-UniRule"/>
</dbReference>
<dbReference type="CDD" id="cd00773">
    <property type="entry name" value="HisRS-like_core"/>
    <property type="match status" value="1"/>
</dbReference>
<dbReference type="CDD" id="cd00859">
    <property type="entry name" value="HisRS_anticodon"/>
    <property type="match status" value="1"/>
</dbReference>
<dbReference type="FunFam" id="3.30.930.10:FF:000005">
    <property type="entry name" value="Histidine--tRNA ligase"/>
    <property type="match status" value="1"/>
</dbReference>
<dbReference type="FunFam" id="3.40.50.800:FF:000007">
    <property type="entry name" value="Histidine--tRNA ligase"/>
    <property type="match status" value="1"/>
</dbReference>
<dbReference type="Gene3D" id="3.40.50.800">
    <property type="entry name" value="Anticodon-binding domain"/>
    <property type="match status" value="1"/>
</dbReference>
<dbReference type="Gene3D" id="3.30.930.10">
    <property type="entry name" value="Bira Bifunctional Protein, Domain 2"/>
    <property type="match status" value="1"/>
</dbReference>
<dbReference type="HAMAP" id="MF_00127">
    <property type="entry name" value="His_tRNA_synth"/>
    <property type="match status" value="1"/>
</dbReference>
<dbReference type="InterPro" id="IPR006195">
    <property type="entry name" value="aa-tRNA-synth_II"/>
</dbReference>
<dbReference type="InterPro" id="IPR045864">
    <property type="entry name" value="aa-tRNA-synth_II/BPL/LPL"/>
</dbReference>
<dbReference type="InterPro" id="IPR004154">
    <property type="entry name" value="Anticodon-bd"/>
</dbReference>
<dbReference type="InterPro" id="IPR036621">
    <property type="entry name" value="Anticodon-bd_dom_sf"/>
</dbReference>
<dbReference type="InterPro" id="IPR015807">
    <property type="entry name" value="His-tRNA-ligase"/>
</dbReference>
<dbReference type="InterPro" id="IPR041715">
    <property type="entry name" value="HisRS-like_core"/>
</dbReference>
<dbReference type="InterPro" id="IPR004516">
    <property type="entry name" value="HisRS/HisZ"/>
</dbReference>
<dbReference type="InterPro" id="IPR033656">
    <property type="entry name" value="HisRS_anticodon"/>
</dbReference>
<dbReference type="NCBIfam" id="TIGR00442">
    <property type="entry name" value="hisS"/>
    <property type="match status" value="1"/>
</dbReference>
<dbReference type="PANTHER" id="PTHR43707:SF1">
    <property type="entry name" value="HISTIDINE--TRNA LIGASE, MITOCHONDRIAL-RELATED"/>
    <property type="match status" value="1"/>
</dbReference>
<dbReference type="PANTHER" id="PTHR43707">
    <property type="entry name" value="HISTIDYL-TRNA SYNTHETASE"/>
    <property type="match status" value="1"/>
</dbReference>
<dbReference type="Pfam" id="PF03129">
    <property type="entry name" value="HGTP_anticodon"/>
    <property type="match status" value="1"/>
</dbReference>
<dbReference type="Pfam" id="PF13393">
    <property type="entry name" value="tRNA-synt_His"/>
    <property type="match status" value="1"/>
</dbReference>
<dbReference type="PIRSF" id="PIRSF001549">
    <property type="entry name" value="His-tRNA_synth"/>
    <property type="match status" value="1"/>
</dbReference>
<dbReference type="SUPFAM" id="SSF52954">
    <property type="entry name" value="Class II aaRS ABD-related"/>
    <property type="match status" value="1"/>
</dbReference>
<dbReference type="SUPFAM" id="SSF55681">
    <property type="entry name" value="Class II aaRS and biotin synthetases"/>
    <property type="match status" value="1"/>
</dbReference>
<dbReference type="PROSITE" id="PS50862">
    <property type="entry name" value="AA_TRNA_LIGASE_II"/>
    <property type="match status" value="1"/>
</dbReference>
<name>SYH_ECOSM</name>
<evidence type="ECO:0000255" key="1">
    <source>
        <dbReference type="HAMAP-Rule" id="MF_00127"/>
    </source>
</evidence>
<organism>
    <name type="scientific">Escherichia coli (strain SMS-3-5 / SECEC)</name>
    <dbReference type="NCBI Taxonomy" id="439855"/>
    <lineage>
        <taxon>Bacteria</taxon>
        <taxon>Pseudomonadati</taxon>
        <taxon>Pseudomonadota</taxon>
        <taxon>Gammaproteobacteria</taxon>
        <taxon>Enterobacterales</taxon>
        <taxon>Enterobacteriaceae</taxon>
        <taxon>Escherichia</taxon>
    </lineage>
</organism>
<protein>
    <recommendedName>
        <fullName evidence="1">Histidine--tRNA ligase</fullName>
        <ecNumber evidence="1">6.1.1.21</ecNumber>
    </recommendedName>
    <alternativeName>
        <fullName evidence="1">Histidyl-tRNA synthetase</fullName>
        <shortName evidence="1">HisRS</shortName>
    </alternativeName>
</protein>
<sequence>MAKNIQAIRGMNDYLPGETAIWQRIEGTLKNVLGSYGYSEIRLPIVEQTPLFKRAIGEVTDVVEKEMYTFEDRNGDSLTLRPEGTAGCVRAGIEHGLLYNQEQRLWYIGPMFRHERPQKGRYRQFHQLGCEVFGLQGPDIDAELIMLTARWWRALGISEHVTLELNSIGSLEARANYRDALVAFLEQHKEKLDEDCKRRMYTNPLRVLDSKNPEVQALLNDAPALGDYLDEESREHFAGLCKLLESAGIAYTVNQRLVRGLDYYNRTVFEWVTNSLGSQGTVCAGGRYDGLVEQLGGRATPAVGFAMGLERLVLLVQAVNPEFKADPVVDIYLVASGADTQSAAMALAERLRDELPGVKLMTNHGGGNFKKQFARADKWGARVAVVLGESEVANGTAVVKDLRSGEQTAVAQDSVAAHLRTLLG</sequence>
<reference key="1">
    <citation type="journal article" date="2008" name="J. Bacteriol.">
        <title>Insights into the environmental resistance gene pool from the genome sequence of the multidrug-resistant environmental isolate Escherichia coli SMS-3-5.</title>
        <authorList>
            <person name="Fricke W.F."/>
            <person name="Wright M.S."/>
            <person name="Lindell A.H."/>
            <person name="Harkins D.M."/>
            <person name="Baker-Austin C."/>
            <person name="Ravel J."/>
            <person name="Stepanauskas R."/>
        </authorList>
    </citation>
    <scope>NUCLEOTIDE SEQUENCE [LARGE SCALE GENOMIC DNA]</scope>
    <source>
        <strain>SMS-3-5 / SECEC</strain>
    </source>
</reference>
<keyword id="KW-0030">Aminoacyl-tRNA synthetase</keyword>
<keyword id="KW-0067">ATP-binding</keyword>
<keyword id="KW-0963">Cytoplasm</keyword>
<keyword id="KW-0436">Ligase</keyword>
<keyword id="KW-0547">Nucleotide-binding</keyword>
<keyword id="KW-0648">Protein biosynthesis</keyword>